<accession>B9JVC5</accession>
<evidence type="ECO:0000255" key="1">
    <source>
        <dbReference type="HAMAP-Rule" id="MF_01366"/>
    </source>
</evidence>
<evidence type="ECO:0000305" key="2"/>
<name>RL13_ALLAM</name>
<reference key="1">
    <citation type="journal article" date="2009" name="J. Bacteriol.">
        <title>Genome sequences of three Agrobacterium biovars help elucidate the evolution of multichromosome genomes in bacteria.</title>
        <authorList>
            <person name="Slater S.C."/>
            <person name="Goldman B.S."/>
            <person name="Goodner B."/>
            <person name="Setubal J.C."/>
            <person name="Farrand S.K."/>
            <person name="Nester E.W."/>
            <person name="Burr T.J."/>
            <person name="Banta L."/>
            <person name="Dickerman A.W."/>
            <person name="Paulsen I."/>
            <person name="Otten L."/>
            <person name="Suen G."/>
            <person name="Welch R."/>
            <person name="Almeida N.F."/>
            <person name="Arnold F."/>
            <person name="Burton O.T."/>
            <person name="Du Z."/>
            <person name="Ewing A."/>
            <person name="Godsy E."/>
            <person name="Heisel S."/>
            <person name="Houmiel K.L."/>
            <person name="Jhaveri J."/>
            <person name="Lu J."/>
            <person name="Miller N.M."/>
            <person name="Norton S."/>
            <person name="Chen Q."/>
            <person name="Phoolcharoen W."/>
            <person name="Ohlin V."/>
            <person name="Ondrusek D."/>
            <person name="Pride N."/>
            <person name="Stricklin S.L."/>
            <person name="Sun J."/>
            <person name="Wheeler C."/>
            <person name="Wilson L."/>
            <person name="Zhu H."/>
            <person name="Wood D.W."/>
        </authorList>
    </citation>
    <scope>NUCLEOTIDE SEQUENCE [LARGE SCALE GENOMIC DNA]</scope>
    <source>
        <strain>ATCC BAA-846 / DSM 112012 / S4</strain>
    </source>
</reference>
<proteinExistence type="inferred from homology"/>
<feature type="chain" id="PRO_1000166844" description="Large ribosomal subunit protein uL13">
    <location>
        <begin position="1"/>
        <end position="154"/>
    </location>
</feature>
<comment type="function">
    <text evidence="1">This protein is one of the early assembly proteins of the 50S ribosomal subunit, although it is not seen to bind rRNA by itself. It is important during the early stages of 50S assembly.</text>
</comment>
<comment type="subunit">
    <text evidence="1">Part of the 50S ribosomal subunit.</text>
</comment>
<comment type="similarity">
    <text evidence="1">Belongs to the universal ribosomal protein uL13 family.</text>
</comment>
<dbReference type="EMBL" id="CP000633">
    <property type="protein sequence ID" value="ACM36205.1"/>
    <property type="molecule type" value="Genomic_DNA"/>
</dbReference>
<dbReference type="RefSeq" id="WP_015915628.1">
    <property type="nucleotide sequence ID" value="NC_011989.1"/>
</dbReference>
<dbReference type="SMR" id="B9JVC5"/>
<dbReference type="STRING" id="311402.Avi_1682"/>
<dbReference type="KEGG" id="avi:Avi_1682"/>
<dbReference type="eggNOG" id="COG0102">
    <property type="taxonomic scope" value="Bacteria"/>
</dbReference>
<dbReference type="HOGENOM" id="CLU_082184_2_0_5"/>
<dbReference type="Proteomes" id="UP000001596">
    <property type="component" value="Chromosome 1"/>
</dbReference>
<dbReference type="GO" id="GO:0022625">
    <property type="term" value="C:cytosolic large ribosomal subunit"/>
    <property type="evidence" value="ECO:0007669"/>
    <property type="project" value="TreeGrafter"/>
</dbReference>
<dbReference type="GO" id="GO:0003729">
    <property type="term" value="F:mRNA binding"/>
    <property type="evidence" value="ECO:0007669"/>
    <property type="project" value="TreeGrafter"/>
</dbReference>
<dbReference type="GO" id="GO:0003735">
    <property type="term" value="F:structural constituent of ribosome"/>
    <property type="evidence" value="ECO:0007669"/>
    <property type="project" value="InterPro"/>
</dbReference>
<dbReference type="GO" id="GO:0017148">
    <property type="term" value="P:negative regulation of translation"/>
    <property type="evidence" value="ECO:0007669"/>
    <property type="project" value="TreeGrafter"/>
</dbReference>
<dbReference type="GO" id="GO:0006412">
    <property type="term" value="P:translation"/>
    <property type="evidence" value="ECO:0007669"/>
    <property type="project" value="UniProtKB-UniRule"/>
</dbReference>
<dbReference type="CDD" id="cd00392">
    <property type="entry name" value="Ribosomal_L13"/>
    <property type="match status" value="1"/>
</dbReference>
<dbReference type="FunFam" id="3.90.1180.10:FF:000001">
    <property type="entry name" value="50S ribosomal protein L13"/>
    <property type="match status" value="1"/>
</dbReference>
<dbReference type="Gene3D" id="3.90.1180.10">
    <property type="entry name" value="Ribosomal protein L13"/>
    <property type="match status" value="1"/>
</dbReference>
<dbReference type="HAMAP" id="MF_01366">
    <property type="entry name" value="Ribosomal_uL13"/>
    <property type="match status" value="1"/>
</dbReference>
<dbReference type="InterPro" id="IPR005822">
    <property type="entry name" value="Ribosomal_uL13"/>
</dbReference>
<dbReference type="InterPro" id="IPR005823">
    <property type="entry name" value="Ribosomal_uL13_bac-type"/>
</dbReference>
<dbReference type="InterPro" id="IPR036899">
    <property type="entry name" value="Ribosomal_uL13_sf"/>
</dbReference>
<dbReference type="NCBIfam" id="TIGR01066">
    <property type="entry name" value="rplM_bact"/>
    <property type="match status" value="1"/>
</dbReference>
<dbReference type="PANTHER" id="PTHR11545:SF2">
    <property type="entry name" value="LARGE RIBOSOMAL SUBUNIT PROTEIN UL13M"/>
    <property type="match status" value="1"/>
</dbReference>
<dbReference type="PANTHER" id="PTHR11545">
    <property type="entry name" value="RIBOSOMAL PROTEIN L13"/>
    <property type="match status" value="1"/>
</dbReference>
<dbReference type="Pfam" id="PF00572">
    <property type="entry name" value="Ribosomal_L13"/>
    <property type="match status" value="1"/>
</dbReference>
<dbReference type="PIRSF" id="PIRSF002181">
    <property type="entry name" value="Ribosomal_L13"/>
    <property type="match status" value="1"/>
</dbReference>
<dbReference type="SUPFAM" id="SSF52161">
    <property type="entry name" value="Ribosomal protein L13"/>
    <property type="match status" value="1"/>
</dbReference>
<organism>
    <name type="scientific">Allorhizobium ampelinum (strain ATCC BAA-846 / DSM 112012 / S4)</name>
    <name type="common">Agrobacterium vitis (strain S4)</name>
    <dbReference type="NCBI Taxonomy" id="311402"/>
    <lineage>
        <taxon>Bacteria</taxon>
        <taxon>Pseudomonadati</taxon>
        <taxon>Pseudomonadota</taxon>
        <taxon>Alphaproteobacteria</taxon>
        <taxon>Hyphomicrobiales</taxon>
        <taxon>Rhizobiaceae</taxon>
        <taxon>Rhizobium/Agrobacterium group</taxon>
        <taxon>Allorhizobium</taxon>
        <taxon>Allorhizobium ampelinum</taxon>
    </lineage>
</organism>
<protein>
    <recommendedName>
        <fullName evidence="1">Large ribosomal subunit protein uL13</fullName>
    </recommendedName>
    <alternativeName>
        <fullName evidence="2">50S ribosomal protein L13</fullName>
    </alternativeName>
</protein>
<sequence length="154" mass="17334">MSTFVQKPAEVEKKWVIIDAEGLVVGRLATVIATYLRGKHKVTYTPHVDDGDNVIVINAEKVVLTGKKYTDKTYYWHTGYPGGIKERTARQIIEGRFPERVLEKAVERMIPRGPLGRRQMKNLRVYAGSAHPHEAQQPVALDVAKLNSKNVRSA</sequence>
<gene>
    <name evidence="1" type="primary">rplM</name>
    <name type="ordered locus">Avi_1682</name>
</gene>
<keyword id="KW-1185">Reference proteome</keyword>
<keyword id="KW-0687">Ribonucleoprotein</keyword>
<keyword id="KW-0689">Ribosomal protein</keyword>